<sequence>MSMLFPLHQQLIEQFTIFLSVDRGIAPLSVQAYCQDILLFLQRVPIETTDMINQESVFLFVEKCHQAKESETTLARRLIALKVFFHFLKDAKLIHQQPFIEHPKVWKRLPSILSTEEVNSLLNQPLNTLNLDAYIANRDTAILYTFYATGIRVSELCDLCIGDISDDFIRVTGKGRKTRLVPISIKARQTIDSYLTMFRERFQKKNPSEEHVFLSIRGKKLERSCVWKRITFYAKLVTTKHISPHSLRHAFATHLLNNQADLRIIQEMLGHARISSTEIYTHVASESIIEKFHTHHPRSSS</sequence>
<proteinExistence type="inferred from homology"/>
<protein>
    <recommendedName>
        <fullName evidence="1">Tyrosine recombinase XerD</fullName>
    </recommendedName>
</protein>
<gene>
    <name evidence="1" type="primary">xerD</name>
    <name type="ordered locus">TC_0255</name>
</gene>
<organism>
    <name type="scientific">Chlamydia muridarum (strain MoPn / Nigg)</name>
    <dbReference type="NCBI Taxonomy" id="243161"/>
    <lineage>
        <taxon>Bacteria</taxon>
        <taxon>Pseudomonadati</taxon>
        <taxon>Chlamydiota</taxon>
        <taxon>Chlamydiia</taxon>
        <taxon>Chlamydiales</taxon>
        <taxon>Chlamydiaceae</taxon>
        <taxon>Chlamydia/Chlamydophila group</taxon>
        <taxon>Chlamydia</taxon>
    </lineage>
</organism>
<reference key="1">
    <citation type="journal article" date="2000" name="Nucleic Acids Res.">
        <title>Genome sequences of Chlamydia trachomatis MoPn and Chlamydia pneumoniae AR39.</title>
        <authorList>
            <person name="Read T.D."/>
            <person name="Brunham R.C."/>
            <person name="Shen C."/>
            <person name="Gill S.R."/>
            <person name="Heidelberg J.F."/>
            <person name="White O."/>
            <person name="Hickey E.K."/>
            <person name="Peterson J.D."/>
            <person name="Utterback T.R."/>
            <person name="Berry K.J."/>
            <person name="Bass S."/>
            <person name="Linher K.D."/>
            <person name="Weidman J.F."/>
            <person name="Khouri H.M."/>
            <person name="Craven B."/>
            <person name="Bowman C."/>
            <person name="Dodson R.J."/>
            <person name="Gwinn M.L."/>
            <person name="Nelson W.C."/>
            <person name="DeBoy R.T."/>
            <person name="Kolonay J.F."/>
            <person name="McClarty G."/>
            <person name="Salzberg S.L."/>
            <person name="Eisen J.A."/>
            <person name="Fraser C.M."/>
        </authorList>
    </citation>
    <scope>NUCLEOTIDE SEQUENCE [LARGE SCALE GENOMIC DNA]</scope>
    <source>
        <strain>MoPn / Nigg</strain>
    </source>
</reference>
<keyword id="KW-0131">Cell cycle</keyword>
<keyword id="KW-0132">Cell division</keyword>
<keyword id="KW-0159">Chromosome partition</keyword>
<keyword id="KW-0963">Cytoplasm</keyword>
<keyword id="KW-0229">DNA integration</keyword>
<keyword id="KW-0233">DNA recombination</keyword>
<keyword id="KW-0238">DNA-binding</keyword>
<name>XERD_CHLMU</name>
<feature type="chain" id="PRO_0000095379" description="Tyrosine recombinase XerD">
    <location>
        <begin position="1"/>
        <end position="301"/>
    </location>
</feature>
<feature type="domain" description="Core-binding (CB)" evidence="3">
    <location>
        <begin position="6"/>
        <end position="89"/>
    </location>
</feature>
<feature type="domain" description="Tyr recombinase" evidence="2">
    <location>
        <begin position="108"/>
        <end position="293"/>
    </location>
</feature>
<feature type="active site" evidence="1">
    <location>
        <position position="152"/>
    </location>
</feature>
<feature type="active site" evidence="1">
    <location>
        <position position="174"/>
    </location>
</feature>
<feature type="active site" evidence="1">
    <location>
        <position position="245"/>
    </location>
</feature>
<feature type="active site" evidence="1">
    <location>
        <position position="248"/>
    </location>
</feature>
<feature type="active site" evidence="1">
    <location>
        <position position="271"/>
    </location>
</feature>
<feature type="active site" description="O-(3'-phospho-DNA)-tyrosine intermediate" evidence="1">
    <location>
        <position position="280"/>
    </location>
</feature>
<evidence type="ECO:0000255" key="1">
    <source>
        <dbReference type="HAMAP-Rule" id="MF_01807"/>
    </source>
</evidence>
<evidence type="ECO:0000255" key="2">
    <source>
        <dbReference type="PROSITE-ProRule" id="PRU01246"/>
    </source>
</evidence>
<evidence type="ECO:0000255" key="3">
    <source>
        <dbReference type="PROSITE-ProRule" id="PRU01248"/>
    </source>
</evidence>
<accession>Q9PL53</accession>
<dbReference type="EMBL" id="AE002160">
    <property type="protein sequence ID" value="AAF39124.1"/>
    <property type="molecule type" value="Genomic_DNA"/>
</dbReference>
<dbReference type="PIR" id="A81724">
    <property type="entry name" value="A81724"/>
</dbReference>
<dbReference type="SMR" id="Q9PL53"/>
<dbReference type="KEGG" id="cmu:TC_0255"/>
<dbReference type="eggNOG" id="COG4974">
    <property type="taxonomic scope" value="Bacteria"/>
</dbReference>
<dbReference type="HOGENOM" id="CLU_027562_9_6_0"/>
<dbReference type="Proteomes" id="UP000000800">
    <property type="component" value="Chromosome"/>
</dbReference>
<dbReference type="GO" id="GO:0005737">
    <property type="term" value="C:cytoplasm"/>
    <property type="evidence" value="ECO:0007669"/>
    <property type="project" value="UniProtKB-SubCell"/>
</dbReference>
<dbReference type="GO" id="GO:0003677">
    <property type="term" value="F:DNA binding"/>
    <property type="evidence" value="ECO:0007669"/>
    <property type="project" value="UniProtKB-KW"/>
</dbReference>
<dbReference type="GO" id="GO:0009037">
    <property type="term" value="F:tyrosine-based site-specific recombinase activity"/>
    <property type="evidence" value="ECO:0007669"/>
    <property type="project" value="UniProtKB-UniRule"/>
</dbReference>
<dbReference type="GO" id="GO:0051301">
    <property type="term" value="P:cell division"/>
    <property type="evidence" value="ECO:0007669"/>
    <property type="project" value="UniProtKB-KW"/>
</dbReference>
<dbReference type="GO" id="GO:0007059">
    <property type="term" value="P:chromosome segregation"/>
    <property type="evidence" value="ECO:0007669"/>
    <property type="project" value="UniProtKB-UniRule"/>
</dbReference>
<dbReference type="GO" id="GO:0006313">
    <property type="term" value="P:DNA transposition"/>
    <property type="evidence" value="ECO:0007669"/>
    <property type="project" value="UniProtKB-UniRule"/>
</dbReference>
<dbReference type="CDD" id="cd00798">
    <property type="entry name" value="INT_XerDC_C"/>
    <property type="match status" value="1"/>
</dbReference>
<dbReference type="Gene3D" id="1.10.150.130">
    <property type="match status" value="1"/>
</dbReference>
<dbReference type="Gene3D" id="1.10.443.10">
    <property type="entry name" value="Intergrase catalytic core"/>
    <property type="match status" value="1"/>
</dbReference>
<dbReference type="HAMAP" id="MF_01808">
    <property type="entry name" value="Recomb_XerC_XerD"/>
    <property type="match status" value="1"/>
</dbReference>
<dbReference type="HAMAP" id="MF_01807">
    <property type="entry name" value="Recomb_XerD"/>
    <property type="match status" value="1"/>
</dbReference>
<dbReference type="InterPro" id="IPR044068">
    <property type="entry name" value="CB"/>
</dbReference>
<dbReference type="InterPro" id="IPR011010">
    <property type="entry name" value="DNA_brk_join_enz"/>
</dbReference>
<dbReference type="InterPro" id="IPR013762">
    <property type="entry name" value="Integrase-like_cat_sf"/>
</dbReference>
<dbReference type="InterPro" id="IPR002104">
    <property type="entry name" value="Integrase_catalytic"/>
</dbReference>
<dbReference type="InterPro" id="IPR010998">
    <property type="entry name" value="Integrase_recombinase_N"/>
</dbReference>
<dbReference type="InterPro" id="IPR004107">
    <property type="entry name" value="Integrase_SAM-like_N"/>
</dbReference>
<dbReference type="InterPro" id="IPR011932">
    <property type="entry name" value="Recomb_XerD"/>
</dbReference>
<dbReference type="InterPro" id="IPR023009">
    <property type="entry name" value="Tyrosine_recombinase_XerC/XerD"/>
</dbReference>
<dbReference type="InterPro" id="IPR050090">
    <property type="entry name" value="Tyrosine_recombinase_XerCD"/>
</dbReference>
<dbReference type="NCBIfam" id="NF001399">
    <property type="entry name" value="PRK00283.1"/>
    <property type="match status" value="1"/>
</dbReference>
<dbReference type="PANTHER" id="PTHR30349">
    <property type="entry name" value="PHAGE INTEGRASE-RELATED"/>
    <property type="match status" value="1"/>
</dbReference>
<dbReference type="PANTHER" id="PTHR30349:SF81">
    <property type="entry name" value="TYROSINE RECOMBINASE XERC"/>
    <property type="match status" value="1"/>
</dbReference>
<dbReference type="Pfam" id="PF02899">
    <property type="entry name" value="Phage_int_SAM_1"/>
    <property type="match status" value="1"/>
</dbReference>
<dbReference type="Pfam" id="PF00589">
    <property type="entry name" value="Phage_integrase"/>
    <property type="match status" value="1"/>
</dbReference>
<dbReference type="SUPFAM" id="SSF56349">
    <property type="entry name" value="DNA breaking-rejoining enzymes"/>
    <property type="match status" value="1"/>
</dbReference>
<dbReference type="SUPFAM" id="SSF47823">
    <property type="entry name" value="lambda integrase-like, N-terminal domain"/>
    <property type="match status" value="1"/>
</dbReference>
<dbReference type="PROSITE" id="PS51900">
    <property type="entry name" value="CB"/>
    <property type="match status" value="1"/>
</dbReference>
<dbReference type="PROSITE" id="PS51898">
    <property type="entry name" value="TYR_RECOMBINASE"/>
    <property type="match status" value="1"/>
</dbReference>
<comment type="function">
    <text evidence="1">Site-specific tyrosine recombinase, which acts by catalyzing the cutting and rejoining of the recombining DNA molecules. The XerC-XerD complex is essential to convert dimers of the bacterial chromosome into monomers to permit their segregation at cell division. It also contributes to the segregational stability of plasmids.</text>
</comment>
<comment type="subunit">
    <text evidence="1">Forms a cyclic heterotetrameric complex composed of two molecules of XerC and two molecules of XerD.</text>
</comment>
<comment type="subcellular location">
    <subcellularLocation>
        <location evidence="1">Cytoplasm</location>
    </subcellularLocation>
</comment>
<comment type="similarity">
    <text evidence="1">Belongs to the 'phage' integrase family. XerD subfamily.</text>
</comment>